<accession>B6JKY5</accession>
<sequence>MKILVIQGPNLNMLGHRDPRLYGMVTLDQIHEIMQTFVKQGNLDVELEFFQTNFEGEIIDKIQESVGSDYEGIIINPGAFSHTSIAIADAIMLAGKPVIEVHLTNIQAREEFRKNSYTGAACGGVIMGFGPLGYNMALMAMVNILAEMKAFQEAQKNNPNNPINNQK</sequence>
<comment type="function">
    <text evidence="1">Catalyzes a trans-dehydration via an enolate intermediate.</text>
</comment>
<comment type="catalytic activity">
    <reaction evidence="1">
        <text>3-dehydroquinate = 3-dehydroshikimate + H2O</text>
        <dbReference type="Rhea" id="RHEA:21096"/>
        <dbReference type="ChEBI" id="CHEBI:15377"/>
        <dbReference type="ChEBI" id="CHEBI:16630"/>
        <dbReference type="ChEBI" id="CHEBI:32364"/>
        <dbReference type="EC" id="4.2.1.10"/>
    </reaction>
</comment>
<comment type="pathway">
    <text evidence="1">Metabolic intermediate biosynthesis; chorismate biosynthesis; chorismate from D-erythrose 4-phosphate and phosphoenolpyruvate: step 3/7.</text>
</comment>
<comment type="subunit">
    <text evidence="1">Homododecamer.</text>
</comment>
<comment type="similarity">
    <text evidence="1">Belongs to the type-II 3-dehydroquinase family.</text>
</comment>
<gene>
    <name evidence="1" type="primary">aroQ</name>
    <name type="ordered locus">HPP12_0406</name>
</gene>
<feature type="chain" id="PRO_1000097602" description="3-dehydroquinate dehydratase">
    <location>
        <begin position="1"/>
        <end position="167"/>
    </location>
</feature>
<feature type="active site" description="Proton acceptor" evidence="1">
    <location>
        <position position="22"/>
    </location>
</feature>
<feature type="active site" description="Proton donor" evidence="1">
    <location>
        <position position="102"/>
    </location>
</feature>
<feature type="binding site" evidence="1">
    <location>
        <position position="76"/>
    </location>
    <ligand>
        <name>substrate</name>
    </ligand>
</feature>
<feature type="binding site" evidence="1">
    <location>
        <position position="82"/>
    </location>
    <ligand>
        <name>substrate</name>
    </ligand>
</feature>
<feature type="binding site" evidence="1">
    <location>
        <position position="89"/>
    </location>
    <ligand>
        <name>substrate</name>
    </ligand>
</feature>
<feature type="binding site" evidence="1">
    <location>
        <begin position="103"/>
        <end position="104"/>
    </location>
    <ligand>
        <name>substrate</name>
    </ligand>
</feature>
<feature type="binding site" evidence="1">
    <location>
        <position position="113"/>
    </location>
    <ligand>
        <name>substrate</name>
    </ligand>
</feature>
<feature type="site" description="Transition state stabilizer" evidence="1">
    <location>
        <position position="17"/>
    </location>
</feature>
<name>AROQ_HELP2</name>
<evidence type="ECO:0000255" key="1">
    <source>
        <dbReference type="HAMAP-Rule" id="MF_00169"/>
    </source>
</evidence>
<dbReference type="EC" id="4.2.1.10" evidence="1"/>
<dbReference type="EMBL" id="CP001217">
    <property type="protein sequence ID" value="ACJ07563.1"/>
    <property type="molecule type" value="Genomic_DNA"/>
</dbReference>
<dbReference type="SMR" id="B6JKY5"/>
<dbReference type="KEGG" id="hpp:HPP12_0406"/>
<dbReference type="HOGENOM" id="CLU_090968_3_0_7"/>
<dbReference type="UniPathway" id="UPA00053">
    <property type="reaction ID" value="UER00086"/>
</dbReference>
<dbReference type="Proteomes" id="UP000008198">
    <property type="component" value="Chromosome"/>
</dbReference>
<dbReference type="GO" id="GO:0003855">
    <property type="term" value="F:3-dehydroquinate dehydratase activity"/>
    <property type="evidence" value="ECO:0007669"/>
    <property type="project" value="UniProtKB-UniRule"/>
</dbReference>
<dbReference type="GO" id="GO:0008652">
    <property type="term" value="P:amino acid biosynthetic process"/>
    <property type="evidence" value="ECO:0007669"/>
    <property type="project" value="UniProtKB-KW"/>
</dbReference>
<dbReference type="GO" id="GO:0009073">
    <property type="term" value="P:aromatic amino acid family biosynthetic process"/>
    <property type="evidence" value="ECO:0007669"/>
    <property type="project" value="UniProtKB-KW"/>
</dbReference>
<dbReference type="GO" id="GO:0009423">
    <property type="term" value="P:chorismate biosynthetic process"/>
    <property type="evidence" value="ECO:0007669"/>
    <property type="project" value="UniProtKB-UniRule"/>
</dbReference>
<dbReference type="GO" id="GO:0019631">
    <property type="term" value="P:quinate catabolic process"/>
    <property type="evidence" value="ECO:0007669"/>
    <property type="project" value="TreeGrafter"/>
</dbReference>
<dbReference type="CDD" id="cd00466">
    <property type="entry name" value="DHQase_II"/>
    <property type="match status" value="1"/>
</dbReference>
<dbReference type="Gene3D" id="3.40.50.9100">
    <property type="entry name" value="Dehydroquinase, class II"/>
    <property type="match status" value="1"/>
</dbReference>
<dbReference type="HAMAP" id="MF_00169">
    <property type="entry name" value="AroQ"/>
    <property type="match status" value="1"/>
</dbReference>
<dbReference type="InterPro" id="IPR001874">
    <property type="entry name" value="DHquinase_II"/>
</dbReference>
<dbReference type="InterPro" id="IPR018509">
    <property type="entry name" value="DHquinase_II_CS"/>
</dbReference>
<dbReference type="InterPro" id="IPR036441">
    <property type="entry name" value="DHquinase_II_sf"/>
</dbReference>
<dbReference type="NCBIfam" id="TIGR01088">
    <property type="entry name" value="aroQ"/>
    <property type="match status" value="1"/>
</dbReference>
<dbReference type="NCBIfam" id="NF003805">
    <property type="entry name" value="PRK05395.1-2"/>
    <property type="match status" value="1"/>
</dbReference>
<dbReference type="NCBIfam" id="NF003806">
    <property type="entry name" value="PRK05395.1-3"/>
    <property type="match status" value="1"/>
</dbReference>
<dbReference type="NCBIfam" id="NF003807">
    <property type="entry name" value="PRK05395.1-4"/>
    <property type="match status" value="1"/>
</dbReference>
<dbReference type="PANTHER" id="PTHR21272">
    <property type="entry name" value="CATABOLIC 3-DEHYDROQUINASE"/>
    <property type="match status" value="1"/>
</dbReference>
<dbReference type="PANTHER" id="PTHR21272:SF3">
    <property type="entry name" value="CATABOLIC 3-DEHYDROQUINASE"/>
    <property type="match status" value="1"/>
</dbReference>
<dbReference type="Pfam" id="PF01220">
    <property type="entry name" value="DHquinase_II"/>
    <property type="match status" value="1"/>
</dbReference>
<dbReference type="PIRSF" id="PIRSF001399">
    <property type="entry name" value="DHquinase_II"/>
    <property type="match status" value="1"/>
</dbReference>
<dbReference type="SUPFAM" id="SSF52304">
    <property type="entry name" value="Type II 3-dehydroquinate dehydratase"/>
    <property type="match status" value="1"/>
</dbReference>
<dbReference type="PROSITE" id="PS01029">
    <property type="entry name" value="DEHYDROQUINASE_II"/>
    <property type="match status" value="1"/>
</dbReference>
<protein>
    <recommendedName>
        <fullName evidence="1">3-dehydroquinate dehydratase</fullName>
        <shortName evidence="1">3-dehydroquinase</shortName>
        <ecNumber evidence="1">4.2.1.10</ecNumber>
    </recommendedName>
    <alternativeName>
        <fullName evidence="1">Type II DHQase</fullName>
    </alternativeName>
</protein>
<reference key="1">
    <citation type="submission" date="2008-10" db="EMBL/GenBank/DDBJ databases">
        <title>The complete genome sequence of Helicobacter pylori strain P12.</title>
        <authorList>
            <person name="Fischer W."/>
            <person name="Windhager L."/>
            <person name="Karnholz A."/>
            <person name="Zeiller M."/>
            <person name="Zimmer R."/>
            <person name="Haas R."/>
        </authorList>
    </citation>
    <scope>NUCLEOTIDE SEQUENCE [LARGE SCALE GENOMIC DNA]</scope>
    <source>
        <strain>P12</strain>
    </source>
</reference>
<proteinExistence type="inferred from homology"/>
<organism>
    <name type="scientific">Helicobacter pylori (strain P12)</name>
    <dbReference type="NCBI Taxonomy" id="570508"/>
    <lineage>
        <taxon>Bacteria</taxon>
        <taxon>Pseudomonadati</taxon>
        <taxon>Campylobacterota</taxon>
        <taxon>Epsilonproteobacteria</taxon>
        <taxon>Campylobacterales</taxon>
        <taxon>Helicobacteraceae</taxon>
        <taxon>Helicobacter</taxon>
    </lineage>
</organism>
<keyword id="KW-0028">Amino-acid biosynthesis</keyword>
<keyword id="KW-0057">Aromatic amino acid biosynthesis</keyword>
<keyword id="KW-0456">Lyase</keyword>